<evidence type="ECO:0000250" key="1">
    <source>
        <dbReference type="UniProtKB" id="D5VRM1"/>
    </source>
</evidence>
<evidence type="ECO:0000250" key="2">
    <source>
        <dbReference type="UniProtKB" id="P69848"/>
    </source>
</evidence>
<evidence type="ECO:0000255" key="3">
    <source>
        <dbReference type="PROSITE-ProRule" id="PRU01266"/>
    </source>
</evidence>
<evidence type="ECO:0000305" key="4"/>
<organism>
    <name type="scientific">Rhizobium meliloti (strain 1021)</name>
    <name type="common">Ensifer meliloti</name>
    <name type="synonym">Sinorhizobium meliloti</name>
    <dbReference type="NCBI Taxonomy" id="266834"/>
    <lineage>
        <taxon>Bacteria</taxon>
        <taxon>Pseudomonadati</taxon>
        <taxon>Pseudomonadota</taxon>
        <taxon>Alphaproteobacteria</taxon>
        <taxon>Hyphomicrobiales</taxon>
        <taxon>Rhizobiaceae</taxon>
        <taxon>Sinorhizobium/Ensifer group</taxon>
        <taxon>Sinorhizobium</taxon>
    </lineage>
</organism>
<name>NIFB_RHIME</name>
<comment type="function">
    <text evidence="1">Involved in the biosynthesis of the iron-molybdenum cofactor (FeMo-co or M-cluster) found in the dinitrogenase enzyme of the nitrogenase complex in nitrogen-fixing microorganisms. NifB catalyzes the crucial step of radical SAM-dependent carbide insertion that occurs concomitant with the insertion of a 9th sulfur and the rearrangement/coupling of two [4Fe-4S] clusters into a [8Fe-9S-C] cluster, the precursor to the M-cluster.</text>
</comment>
<comment type="cofactor">
    <cofactor evidence="1">
        <name>[4Fe-4S] cluster</name>
        <dbReference type="ChEBI" id="CHEBI:49883"/>
    </cofactor>
    <text evidence="1">Binds 3 [4Fe-4S] clusters per monomer. One cluster is coordinated with 3 cysteines and an exchangeable S-adenosyl-L-methionine. The two others probably act as substrate.</text>
</comment>
<comment type="pathway">
    <text evidence="1">Cofactor biosynthesis; Fe-Mo cofactor biosynthesis.</text>
</comment>
<comment type="similarity">
    <text evidence="4">Belongs to the radical SAM superfamily. NifB family.</text>
</comment>
<keyword id="KW-0004">4Fe-4S</keyword>
<keyword id="KW-0408">Iron</keyword>
<keyword id="KW-0411">Iron-sulfur</keyword>
<keyword id="KW-0456">Lyase</keyword>
<keyword id="KW-0479">Metal-binding</keyword>
<keyword id="KW-0535">Nitrogen fixation</keyword>
<keyword id="KW-0614">Plasmid</keyword>
<keyword id="KW-1185">Reference proteome</keyword>
<keyword id="KW-0949">S-adenosyl-L-methionine</keyword>
<dbReference type="EC" id="4.-.-.-"/>
<dbReference type="EMBL" id="M15544">
    <property type="protein sequence ID" value="AAA26306.1"/>
    <property type="molecule type" value="Genomic_DNA"/>
</dbReference>
<dbReference type="EMBL" id="AE006469">
    <property type="protein sequence ID" value="AAK65100.1"/>
    <property type="molecule type" value="Genomic_DNA"/>
</dbReference>
<dbReference type="PIR" id="A26951">
    <property type="entry name" value="A26951"/>
</dbReference>
<dbReference type="PIR" id="B95317">
    <property type="entry name" value="B95317"/>
</dbReference>
<dbReference type="RefSeq" id="NP_435688.1">
    <property type="nucleotide sequence ID" value="NC_003037.1"/>
</dbReference>
<dbReference type="RefSeq" id="WP_010967430.1">
    <property type="nucleotide sequence ID" value="NC_003037.1"/>
</dbReference>
<dbReference type="SMR" id="P09824"/>
<dbReference type="EnsemblBacteria" id="AAK65100">
    <property type="protein sequence ID" value="AAK65100"/>
    <property type="gene ID" value="SMa0814"/>
</dbReference>
<dbReference type="KEGG" id="sme:SMa0814"/>
<dbReference type="PATRIC" id="fig|266834.11.peg.455"/>
<dbReference type="HOGENOM" id="CLU_027639_0_0_5"/>
<dbReference type="OrthoDB" id="9785734at2"/>
<dbReference type="UniPathway" id="UPA00782"/>
<dbReference type="Proteomes" id="UP000001976">
    <property type="component" value="Plasmid pSymA"/>
</dbReference>
<dbReference type="GO" id="GO:0051539">
    <property type="term" value="F:4 iron, 4 sulfur cluster binding"/>
    <property type="evidence" value="ECO:0007669"/>
    <property type="project" value="UniProtKB-KW"/>
</dbReference>
<dbReference type="GO" id="GO:0016829">
    <property type="term" value="F:lyase activity"/>
    <property type="evidence" value="ECO:0007669"/>
    <property type="project" value="UniProtKB-KW"/>
</dbReference>
<dbReference type="GO" id="GO:0046872">
    <property type="term" value="F:metal ion binding"/>
    <property type="evidence" value="ECO:0007669"/>
    <property type="project" value="UniProtKB-KW"/>
</dbReference>
<dbReference type="GO" id="GO:0009399">
    <property type="term" value="P:nitrogen fixation"/>
    <property type="evidence" value="ECO:0007669"/>
    <property type="project" value="UniProtKB-KW"/>
</dbReference>
<dbReference type="CDD" id="cd00852">
    <property type="entry name" value="NifB"/>
    <property type="match status" value="1"/>
</dbReference>
<dbReference type="CDD" id="cd01335">
    <property type="entry name" value="Radical_SAM"/>
    <property type="match status" value="1"/>
</dbReference>
<dbReference type="Gene3D" id="3.20.20.70">
    <property type="entry name" value="Aldolase class I"/>
    <property type="match status" value="1"/>
</dbReference>
<dbReference type="Gene3D" id="3.30.420.130">
    <property type="entry name" value="Dinitrogenase iron-molybdenum cofactor biosynthesis domain"/>
    <property type="match status" value="1"/>
</dbReference>
<dbReference type="InterPro" id="IPR013785">
    <property type="entry name" value="Aldolase_TIM"/>
</dbReference>
<dbReference type="InterPro" id="IPR003731">
    <property type="entry name" value="Di-Nase_FeMo-co_biosynth"/>
</dbReference>
<dbReference type="InterPro" id="IPR036105">
    <property type="entry name" value="DiNase_FeMo-co_biosyn_sf"/>
</dbReference>
<dbReference type="InterPro" id="IPR000385">
    <property type="entry name" value="MoaA_NifB_PqqE_Fe-S-bd_CS"/>
</dbReference>
<dbReference type="InterPro" id="IPR005980">
    <property type="entry name" value="Nase_CF_NifB"/>
</dbReference>
<dbReference type="InterPro" id="IPR034165">
    <property type="entry name" value="NifB_C"/>
</dbReference>
<dbReference type="InterPro" id="IPR007197">
    <property type="entry name" value="rSAM"/>
</dbReference>
<dbReference type="NCBIfam" id="TIGR01290">
    <property type="entry name" value="nifB"/>
    <property type="match status" value="1"/>
</dbReference>
<dbReference type="PANTHER" id="PTHR43787:SF13">
    <property type="entry name" value="FEMO COFACTOR BIOSYNTHESIS PROTEIN NIFB"/>
    <property type="match status" value="1"/>
</dbReference>
<dbReference type="PANTHER" id="PTHR43787">
    <property type="entry name" value="FEMO COFACTOR BIOSYNTHESIS PROTEIN NIFB-RELATED"/>
    <property type="match status" value="1"/>
</dbReference>
<dbReference type="Pfam" id="PF02579">
    <property type="entry name" value="Nitro_FeMo-Co"/>
    <property type="match status" value="1"/>
</dbReference>
<dbReference type="Pfam" id="PF04055">
    <property type="entry name" value="Radical_SAM"/>
    <property type="match status" value="1"/>
</dbReference>
<dbReference type="SFLD" id="SFLDF00281">
    <property type="entry name" value="FeMo_cofactor_biosynthesis_pro"/>
    <property type="match status" value="1"/>
</dbReference>
<dbReference type="SFLD" id="SFLDS00029">
    <property type="entry name" value="Radical_SAM"/>
    <property type="match status" value="1"/>
</dbReference>
<dbReference type="SFLD" id="SFLDG01067">
    <property type="entry name" value="SPASM/twitch_domain_containing"/>
    <property type="match status" value="1"/>
</dbReference>
<dbReference type="SUPFAM" id="SSF53146">
    <property type="entry name" value="Nitrogenase accessory factor-like"/>
    <property type="match status" value="1"/>
</dbReference>
<dbReference type="SUPFAM" id="SSF102114">
    <property type="entry name" value="Radical SAM enzymes"/>
    <property type="match status" value="1"/>
</dbReference>
<dbReference type="PROSITE" id="PS01305">
    <property type="entry name" value="MOAA_NIFB_PQQE"/>
    <property type="match status" value="1"/>
</dbReference>
<dbReference type="PROSITE" id="PS51918">
    <property type="entry name" value="RADICAL_SAM"/>
    <property type="match status" value="1"/>
</dbReference>
<gene>
    <name type="primary">nifB</name>
    <name type="ordered locus">RA0442</name>
    <name type="ORF">SMa0814</name>
</gene>
<geneLocation type="plasmid">
    <name>pSymA</name>
    <name>megaplasmid 1</name>
</geneLocation>
<proteinExistence type="inferred from homology"/>
<accession>P09824</accession>
<protein>
    <recommendedName>
        <fullName>FeMo cofactor biosynthesis protein NifB</fullName>
        <ecNumber>4.-.-.-</ecNumber>
    </recommendedName>
    <alternativeName>
        <fullName>Nitrogenase cofactor maturase NifB</fullName>
    </alternativeName>
    <alternativeName>
        <fullName>Radical SAM assemblase NifB</fullName>
    </alternativeName>
</protein>
<reference key="1">
    <citation type="journal article" date="1987" name="J. Bacteriol.">
        <title>Conservation of structure and location of Rhizobium meliloti and Klebsiella pneumoniae nifB genes.</title>
        <authorList>
            <person name="Buikema W.J."/>
            <person name="Klingensmith J.A."/>
            <person name="Gibbons S.L."/>
            <person name="Ausubel F.M."/>
        </authorList>
    </citation>
    <scope>NUCLEOTIDE SEQUENCE [GENOMIC DNA]</scope>
</reference>
<reference key="2">
    <citation type="journal article" date="2001" name="Proc. Natl. Acad. Sci. U.S.A.">
        <title>Nucleotide sequence and predicted functions of the entire Sinorhizobium meliloti pSymA megaplasmid.</title>
        <authorList>
            <person name="Barnett M.J."/>
            <person name="Fisher R.F."/>
            <person name="Jones T."/>
            <person name="Komp C."/>
            <person name="Abola A.P."/>
            <person name="Barloy-Hubler F."/>
            <person name="Bowser L."/>
            <person name="Capela D."/>
            <person name="Galibert F."/>
            <person name="Gouzy J."/>
            <person name="Gurjal M."/>
            <person name="Hong A."/>
            <person name="Huizar L."/>
            <person name="Hyman R.W."/>
            <person name="Kahn D."/>
            <person name="Kahn M.L."/>
            <person name="Kalman S."/>
            <person name="Keating D.H."/>
            <person name="Palm C."/>
            <person name="Peck M.C."/>
            <person name="Surzycki R."/>
            <person name="Wells D.H."/>
            <person name="Yeh K.-C."/>
            <person name="Davis R.W."/>
            <person name="Federspiel N.A."/>
            <person name="Long S.R."/>
        </authorList>
    </citation>
    <scope>NUCLEOTIDE SEQUENCE [LARGE SCALE GENOMIC DNA]</scope>
    <source>
        <strain>1021</strain>
    </source>
</reference>
<reference key="3">
    <citation type="journal article" date="2001" name="Science">
        <title>The composite genome of the legume symbiont Sinorhizobium meliloti.</title>
        <authorList>
            <person name="Galibert F."/>
            <person name="Finan T.M."/>
            <person name="Long S.R."/>
            <person name="Puehler A."/>
            <person name="Abola P."/>
            <person name="Ampe F."/>
            <person name="Barloy-Hubler F."/>
            <person name="Barnett M.J."/>
            <person name="Becker A."/>
            <person name="Boistard P."/>
            <person name="Bothe G."/>
            <person name="Boutry M."/>
            <person name="Bowser L."/>
            <person name="Buhrmester J."/>
            <person name="Cadieu E."/>
            <person name="Capela D."/>
            <person name="Chain P."/>
            <person name="Cowie A."/>
            <person name="Davis R.W."/>
            <person name="Dreano S."/>
            <person name="Federspiel N.A."/>
            <person name="Fisher R.F."/>
            <person name="Gloux S."/>
            <person name="Godrie T."/>
            <person name="Goffeau A."/>
            <person name="Golding B."/>
            <person name="Gouzy J."/>
            <person name="Gurjal M."/>
            <person name="Hernandez-Lucas I."/>
            <person name="Hong A."/>
            <person name="Huizar L."/>
            <person name="Hyman R.W."/>
            <person name="Jones T."/>
            <person name="Kahn D."/>
            <person name="Kahn M.L."/>
            <person name="Kalman S."/>
            <person name="Keating D.H."/>
            <person name="Kiss E."/>
            <person name="Komp C."/>
            <person name="Lelaure V."/>
            <person name="Masuy D."/>
            <person name="Palm C."/>
            <person name="Peck M.C."/>
            <person name="Pohl T.M."/>
            <person name="Portetelle D."/>
            <person name="Purnelle B."/>
            <person name="Ramsperger U."/>
            <person name="Surzycki R."/>
            <person name="Thebault P."/>
            <person name="Vandenbol M."/>
            <person name="Vorhoelter F.J."/>
            <person name="Weidner S."/>
            <person name="Wells D.H."/>
            <person name="Wong K."/>
            <person name="Yeh K.-C."/>
            <person name="Batut J."/>
        </authorList>
    </citation>
    <scope>NUCLEOTIDE SEQUENCE [LARGE SCALE GENOMIC DNA]</scope>
    <source>
        <strain>1021</strain>
    </source>
</reference>
<feature type="chain" id="PRO_0000153045" description="FeMo cofactor biosynthesis protein NifB">
    <location>
        <begin position="1"/>
        <end position="490"/>
    </location>
</feature>
<feature type="domain" description="Radical SAM core" evidence="3">
    <location>
        <begin position="58"/>
        <end position="308"/>
    </location>
</feature>
<feature type="binding site" evidence="2">
    <location>
        <position position="72"/>
    </location>
    <ligand>
        <name>[4Fe-4S] cluster</name>
        <dbReference type="ChEBI" id="CHEBI:49883"/>
        <label>1</label>
        <note>4Fe-4S-S-AdoMet</note>
    </ligand>
</feature>
<feature type="binding site" evidence="2">
    <location>
        <position position="76"/>
    </location>
    <ligand>
        <name>[4Fe-4S] cluster</name>
        <dbReference type="ChEBI" id="CHEBI:49883"/>
        <label>1</label>
        <note>4Fe-4S-S-AdoMet</note>
    </ligand>
</feature>
<feature type="binding site" evidence="2">
    <location>
        <position position="78"/>
    </location>
    <ligand>
        <name>S-adenosyl-L-methionine</name>
        <dbReference type="ChEBI" id="CHEBI:59789"/>
    </ligand>
</feature>
<feature type="binding site" evidence="2">
    <location>
        <position position="79"/>
    </location>
    <ligand>
        <name>[4Fe-4S] cluster</name>
        <dbReference type="ChEBI" id="CHEBI:49883"/>
        <label>1</label>
        <note>4Fe-4S-S-AdoMet</note>
    </ligand>
</feature>
<feature type="binding site" evidence="2">
    <location>
        <position position="126"/>
    </location>
    <ligand>
        <name>S-adenosyl-L-methionine</name>
        <dbReference type="ChEBI" id="CHEBI:59789"/>
    </ligand>
</feature>
<feature type="binding site" evidence="2">
    <location>
        <position position="178"/>
    </location>
    <ligand>
        <name>S-adenosyl-L-methionine</name>
        <dbReference type="ChEBI" id="CHEBI:59789"/>
    </ligand>
</feature>
<feature type="binding site" evidence="1">
    <location>
        <position position="302"/>
    </location>
    <ligand>
        <name>[4Fe-4S] cluster</name>
        <dbReference type="ChEBI" id="CHEBI:49883"/>
        <label>2</label>
    </ligand>
</feature>
<feature type="binding site" evidence="1">
    <location>
        <position position="305"/>
    </location>
    <ligand>
        <name>[4Fe-4S] cluster</name>
        <dbReference type="ChEBI" id="CHEBI:49883"/>
        <label>2</label>
    </ligand>
</feature>
<feature type="sequence conflict" description="In Ref. 1; AAA26306." evidence="4" ref="1">
    <original>GALYAAEFG</original>
    <variation>ESSTPPSLA</variation>
    <location>
        <begin position="472"/>
        <end position="480"/>
    </location>
</feature>
<feature type="sequence conflict" description="In Ref. 1; AAA26306." evidence="4" ref="1">
    <original>A</original>
    <variation>R</variation>
    <location>
        <position position="490"/>
    </location>
</feature>
<sequence length="490" mass="54224">MSTPMILRESRTSTTFSDQLLENAKSVGCSPPSTAPGDIDPGTWDKIKNHPCFSEEAHHYFARMHVAVAPACNIQCNYCNRKYDCANESRPGVASEKLTPDQAVRKVIAVANEVPQLSVLGIAGPGDACYDWKKTRATFERVAREIPDIRLCISTNGLSLPDHVDELAEMNVDHVTITINMVDPRVGVKIYPWIYYGQRRHTGIDAARILHERQMLGLEMLAERGILTKVNSVMIPGVNDEHLIEVNKVVKGRGALLHNVMPLISNRIHGTYYGLTGQRGPEAFELQALQDRLEGTKLMRHCRHCRADAIGLLGDDRGHEFTLAEIPDEITYDASKRQAYRQLVARERGDHLVAKNEANRTVMSVEYGGSLLIAVATKGGGRINEHFGHAKEFHVYTVSQRGIKLAGRRRVEQYCLGGWGEVATLDHIVVALEGIDILLCVKIGDYPRKQLTQAGLRATEAYGHDYIESALGALYAAEFGIEPPVKTATA</sequence>